<keyword id="KW-1015">Disulfide bond</keyword>
<keyword id="KW-0964">Secreted</keyword>
<keyword id="KW-0732">Signal</keyword>
<keyword id="KW-0800">Toxin</keyword>
<reference key="1">
    <citation type="journal article" date="2010" name="J. Proteome Res.">
        <title>Molecular diversification of peptide toxins from the tarantula Haplopelma hainanum (Ornithoctonus hainana) venom based on transcriptomic, peptidomic, and genomic analyses.</title>
        <authorList>
            <person name="Tang X."/>
            <person name="Zhang Y."/>
            <person name="Hu W."/>
            <person name="Xu D."/>
            <person name="Tao H."/>
            <person name="Yang X."/>
            <person name="Li Y."/>
            <person name="Jiang L."/>
            <person name="Liang S."/>
        </authorList>
    </citation>
    <scope>NUCLEOTIDE SEQUENCE [LARGE SCALE MRNA]</scope>
    <source>
        <tissue>Venom gland</tissue>
    </source>
</reference>
<proteinExistence type="evidence at transcript level"/>
<comment type="subcellular location">
    <subcellularLocation>
        <location evidence="1">Secreted</location>
    </subcellularLocation>
</comment>
<comment type="tissue specificity">
    <text>Expressed by the venom gland.</text>
</comment>
<comment type="similarity">
    <text evidence="4">Belongs to the AVIT (prokineticin) family.</text>
</comment>
<accession>D2Y2E0</accession>
<sequence length="84" mass="9264">MKVVLIVCLVWVMAMMELVSCECWSQADCSDGHCCAGSSFSKNCRPYGGDGEQCGPRNKYEVYSTGCPYEENLMCSVINRCQSA</sequence>
<organism>
    <name type="scientific">Cyriopagopus hainanus</name>
    <name type="common">Chinese bird spider</name>
    <name type="synonym">Haplopelma hainanum</name>
    <dbReference type="NCBI Taxonomy" id="209901"/>
    <lineage>
        <taxon>Eukaryota</taxon>
        <taxon>Metazoa</taxon>
        <taxon>Ecdysozoa</taxon>
        <taxon>Arthropoda</taxon>
        <taxon>Chelicerata</taxon>
        <taxon>Arachnida</taxon>
        <taxon>Araneae</taxon>
        <taxon>Mygalomorphae</taxon>
        <taxon>Theraphosidae</taxon>
        <taxon>Haplopelma</taxon>
    </lineage>
</organism>
<name>H14B1_CYRHA</name>
<evidence type="ECO:0000250" key="1"/>
<evidence type="ECO:0000250" key="2">
    <source>
        <dbReference type="UniProtKB" id="Q9PW66"/>
    </source>
</evidence>
<evidence type="ECO:0000255" key="3"/>
<evidence type="ECO:0000305" key="4"/>
<evidence type="ECO:0000312" key="5">
    <source>
        <dbReference type="EMBL" id="ADB56833.1"/>
    </source>
</evidence>
<dbReference type="EMBL" id="GU293017">
    <property type="protein sequence ID" value="ADB56833.1"/>
    <property type="molecule type" value="mRNA"/>
</dbReference>
<dbReference type="SMR" id="D2Y2E0"/>
<dbReference type="ArachnoServer" id="AS001507">
    <property type="toxin name" value="U8-theraphotoxin-Hhn1b"/>
</dbReference>
<dbReference type="GO" id="GO:0005576">
    <property type="term" value="C:extracellular region"/>
    <property type="evidence" value="ECO:0007669"/>
    <property type="project" value="UniProtKB-SubCell"/>
</dbReference>
<dbReference type="GO" id="GO:0090729">
    <property type="term" value="F:toxin activity"/>
    <property type="evidence" value="ECO:0007669"/>
    <property type="project" value="UniProtKB-KW"/>
</dbReference>
<dbReference type="Gene3D" id="2.10.80.10">
    <property type="entry name" value="Lipase, subunit A"/>
    <property type="match status" value="1"/>
</dbReference>
<dbReference type="InterPro" id="IPR023569">
    <property type="entry name" value="Prokineticin_domain"/>
</dbReference>
<dbReference type="Pfam" id="PF06607">
    <property type="entry name" value="Prokineticin"/>
    <property type="match status" value="1"/>
</dbReference>
<feature type="signal peptide" evidence="3">
    <location>
        <begin position="1"/>
        <end position="21"/>
    </location>
</feature>
<feature type="chain" id="PRO_0000400848" description="U8-theraphotoxin-Hhn1b">
    <location>
        <begin position="22"/>
        <end position="84"/>
    </location>
</feature>
<feature type="disulfide bond" evidence="2">
    <location>
        <begin position="23"/>
        <end position="35"/>
    </location>
</feature>
<feature type="disulfide bond" evidence="2">
    <location>
        <begin position="29"/>
        <end position="44"/>
    </location>
</feature>
<feature type="disulfide bond" evidence="2">
    <location>
        <begin position="34"/>
        <end position="67"/>
    </location>
</feature>
<feature type="disulfide bond" evidence="2">
    <location>
        <begin position="54"/>
        <end position="75"/>
    </location>
</feature>
<protein>
    <recommendedName>
        <fullName>U8-theraphotoxin-Hhn1b</fullName>
        <shortName>U8-TRTX-Hhn1b</shortName>
    </recommendedName>
    <alternativeName>
        <fullName evidence="5">Hainantoxin-XIV-2</fullName>
        <shortName evidence="5">HNTX-XIV-2</shortName>
    </alternativeName>
</protein>